<proteinExistence type="inferred from homology"/>
<protein>
    <recommendedName>
        <fullName evidence="1">RNA polymerase-associated protein RapA</fullName>
        <ecNumber evidence="1">3.6.4.-</ecNumber>
    </recommendedName>
    <alternativeName>
        <fullName evidence="1">ATP-dependent helicase HepA</fullName>
    </alternativeName>
</protein>
<comment type="function">
    <text evidence="1">Transcription regulator that activates transcription by stimulating RNA polymerase (RNAP) recycling in case of stress conditions such as supercoiled DNA or high salt concentrations. Probably acts by releasing the RNAP, when it is trapped or immobilized on tightly supercoiled DNA. Does not activate transcription on linear DNA. Probably not involved in DNA repair.</text>
</comment>
<comment type="subunit">
    <text evidence="1">Interacts with the RNAP. Has a higher affinity for the core RNAP than for the holoenzyme. Its ATPase activity is stimulated by binding to RNAP.</text>
</comment>
<comment type="similarity">
    <text evidence="1">Belongs to the SNF2/RAD54 helicase family. RapA subfamily.</text>
</comment>
<feature type="chain" id="PRO_1000088367" description="RNA polymerase-associated protein RapA">
    <location>
        <begin position="1"/>
        <end position="948"/>
    </location>
</feature>
<feature type="domain" description="Helicase ATP-binding" evidence="1">
    <location>
        <begin position="164"/>
        <end position="332"/>
    </location>
</feature>
<feature type="domain" description="Helicase C-terminal" evidence="1">
    <location>
        <begin position="473"/>
        <end position="627"/>
    </location>
</feature>
<feature type="short sequence motif" description="DEAH box">
    <location>
        <begin position="278"/>
        <end position="281"/>
    </location>
</feature>
<feature type="binding site" evidence="1">
    <location>
        <begin position="177"/>
        <end position="184"/>
    </location>
    <ligand>
        <name>ATP</name>
        <dbReference type="ChEBI" id="CHEBI:30616"/>
    </ligand>
</feature>
<organism>
    <name type="scientific">Pseudomonas putida (strain ATCC 700007 / DSM 6899 / JCM 31910 / BCRC 17059 / LMG 24140 / F1)</name>
    <dbReference type="NCBI Taxonomy" id="351746"/>
    <lineage>
        <taxon>Bacteria</taxon>
        <taxon>Pseudomonadati</taxon>
        <taxon>Pseudomonadota</taxon>
        <taxon>Gammaproteobacteria</taxon>
        <taxon>Pseudomonadales</taxon>
        <taxon>Pseudomonadaceae</taxon>
        <taxon>Pseudomonas</taxon>
    </lineage>
</organism>
<gene>
    <name evidence="1" type="primary">rapA</name>
    <name type="ordered locus">Pput_1179</name>
</gene>
<evidence type="ECO:0000255" key="1">
    <source>
        <dbReference type="HAMAP-Rule" id="MF_01821"/>
    </source>
</evidence>
<sequence>MAQQYQPGQRWISDSEAELGLGTILAQDGRLLTVLYPATGDTRQYSLRNAPLTRVRFSPGDQITHFEGWKLTVREVEDIDGLMVYHGLDGQNQPRTLPETQLSNFIQFRLASDRLFAGQIDPLSWFSLRYNTLQHTSKQMQSALWGLGGCRAQPIAHQLHIAREVADRSAPRVLLADEVGLGKTIEAGLVIHRQLLSGRASRVLILVPENLQHQWLVEMRRRFNLQVALFDAERFIESDASNPFEDAQLALVALEWLVDDEKAQDALFAAGWDLMVVDEAHHLVWHEDQVSAEYGLVEQLAQVIPGVLLLTATPEQLGQDSHFARLRLLDPNRFHDLAAFRAESEHYRPVAEAVQELLDEGRLSPKAHATILGFLGAEGEALLAAVSDGDTQASARLIRELLDRHGTGRVLFRNTRAAIQGFPERQLHPYPLATPEQYRNLPAGEHAELYPEVAFQAQGEVADDERWWRFDPRVDWLIDTLKMLKRTKVLVICAHAETAMDLEDALRVRSGIPASVFHEGMSILERDRAAAYFADEEFGAQVLICSEIGSEGRNFQFAHHLVMFDLPAHPDLLEQRIGRLDRIGQKHTIQLHIPYLQDSPQERLFQWYHEGLNAFLNTCPTGNALQHQFGPRLLPLLEGGDHKAWDTLVADARSERERLEAELHTGRDRLLELNSGGAGEGQALVEAILEQDDQFALPIYMETLFDAFGIDSEDHSENALILKPSEKMLDASFPLGDDEGVTITYDRGQALSREDMQFLTWEHPMVQGGMDLVLSGSMGNTAVALIKNKALKPGTVLLELLFVSEVVAPRSLQLGRYLPPAALRCLLDANGNDLASRVAFETLNDQLESVPRASANKFVQAQRDVLAKRISGGEEKILPAHNERVAEAQRRLTAEADEELARLVALQAVNPSVRDSEIDALRKRREDGLAMLEKAALRLEAIRVLVAG</sequence>
<name>RAPA_PSEP1</name>
<accession>A5VZN0</accession>
<reference key="1">
    <citation type="submission" date="2007-05" db="EMBL/GenBank/DDBJ databases">
        <title>Complete sequence of Pseudomonas putida F1.</title>
        <authorList>
            <consortium name="US DOE Joint Genome Institute"/>
            <person name="Copeland A."/>
            <person name="Lucas S."/>
            <person name="Lapidus A."/>
            <person name="Barry K."/>
            <person name="Detter J.C."/>
            <person name="Glavina del Rio T."/>
            <person name="Hammon N."/>
            <person name="Israni S."/>
            <person name="Dalin E."/>
            <person name="Tice H."/>
            <person name="Pitluck S."/>
            <person name="Chain P."/>
            <person name="Malfatti S."/>
            <person name="Shin M."/>
            <person name="Vergez L."/>
            <person name="Schmutz J."/>
            <person name="Larimer F."/>
            <person name="Land M."/>
            <person name="Hauser L."/>
            <person name="Kyrpides N."/>
            <person name="Lykidis A."/>
            <person name="Parales R."/>
            <person name="Richardson P."/>
        </authorList>
    </citation>
    <scope>NUCLEOTIDE SEQUENCE [LARGE SCALE GENOMIC DNA]</scope>
    <source>
        <strain>ATCC 700007 / DSM 6899 / JCM 31910 / BCRC 17059 / LMG 24140 / F1</strain>
    </source>
</reference>
<dbReference type="EC" id="3.6.4.-" evidence="1"/>
<dbReference type="EMBL" id="CP000712">
    <property type="protein sequence ID" value="ABQ77340.1"/>
    <property type="molecule type" value="Genomic_DNA"/>
</dbReference>
<dbReference type="SMR" id="A5VZN0"/>
<dbReference type="KEGG" id="ppf:Pput_1179"/>
<dbReference type="eggNOG" id="COG0553">
    <property type="taxonomic scope" value="Bacteria"/>
</dbReference>
<dbReference type="HOGENOM" id="CLU_011520_0_0_6"/>
<dbReference type="GO" id="GO:0005524">
    <property type="term" value="F:ATP binding"/>
    <property type="evidence" value="ECO:0007669"/>
    <property type="project" value="UniProtKB-UniRule"/>
</dbReference>
<dbReference type="GO" id="GO:0003677">
    <property type="term" value="F:DNA binding"/>
    <property type="evidence" value="ECO:0007669"/>
    <property type="project" value="UniProtKB-KW"/>
</dbReference>
<dbReference type="GO" id="GO:0004386">
    <property type="term" value="F:helicase activity"/>
    <property type="evidence" value="ECO:0007669"/>
    <property type="project" value="UniProtKB-UniRule"/>
</dbReference>
<dbReference type="GO" id="GO:0016817">
    <property type="term" value="F:hydrolase activity, acting on acid anhydrides"/>
    <property type="evidence" value="ECO:0007669"/>
    <property type="project" value="InterPro"/>
</dbReference>
<dbReference type="GO" id="GO:0006355">
    <property type="term" value="P:regulation of DNA-templated transcription"/>
    <property type="evidence" value="ECO:0007669"/>
    <property type="project" value="UniProtKB-UniRule"/>
</dbReference>
<dbReference type="CDD" id="cd18011">
    <property type="entry name" value="DEXDc_RapA"/>
    <property type="match status" value="1"/>
</dbReference>
<dbReference type="CDD" id="cd18793">
    <property type="entry name" value="SF2_C_SNF"/>
    <property type="match status" value="1"/>
</dbReference>
<dbReference type="Gene3D" id="2.30.30.140">
    <property type="match status" value="1"/>
</dbReference>
<dbReference type="Gene3D" id="2.30.30.930">
    <property type="match status" value="1"/>
</dbReference>
<dbReference type="Gene3D" id="3.30.360.80">
    <property type="match status" value="1"/>
</dbReference>
<dbReference type="Gene3D" id="6.10.140.1500">
    <property type="match status" value="1"/>
</dbReference>
<dbReference type="Gene3D" id="6.10.140.2230">
    <property type="match status" value="1"/>
</dbReference>
<dbReference type="Gene3D" id="3.40.50.300">
    <property type="entry name" value="P-loop containing nucleotide triphosphate hydrolases"/>
    <property type="match status" value="1"/>
</dbReference>
<dbReference type="Gene3D" id="3.40.50.10810">
    <property type="entry name" value="Tandem AAA-ATPase domain"/>
    <property type="match status" value="1"/>
</dbReference>
<dbReference type="HAMAP" id="MF_01821">
    <property type="entry name" value="Helicase_RapA"/>
    <property type="match status" value="1"/>
</dbReference>
<dbReference type="InterPro" id="IPR014001">
    <property type="entry name" value="Helicase_ATP-bd"/>
</dbReference>
<dbReference type="InterPro" id="IPR001650">
    <property type="entry name" value="Helicase_C-like"/>
</dbReference>
<dbReference type="InterPro" id="IPR023949">
    <property type="entry name" value="Helicase_RapA"/>
</dbReference>
<dbReference type="InterPro" id="IPR027417">
    <property type="entry name" value="P-loop_NTPase"/>
</dbReference>
<dbReference type="InterPro" id="IPR022737">
    <property type="entry name" value="RapA_C"/>
</dbReference>
<dbReference type="InterPro" id="IPR038718">
    <property type="entry name" value="SNF2-like_sf"/>
</dbReference>
<dbReference type="InterPro" id="IPR049730">
    <property type="entry name" value="SNF2/RAD54-like_C"/>
</dbReference>
<dbReference type="InterPro" id="IPR000330">
    <property type="entry name" value="SNF2_N"/>
</dbReference>
<dbReference type="InterPro" id="IPR040765">
    <property type="entry name" value="Tudor_1_RapA"/>
</dbReference>
<dbReference type="InterPro" id="IPR040766">
    <property type="entry name" value="Tudor_2_RapA"/>
</dbReference>
<dbReference type="NCBIfam" id="NF003426">
    <property type="entry name" value="PRK04914.1"/>
    <property type="match status" value="1"/>
</dbReference>
<dbReference type="PANTHER" id="PTHR45766">
    <property type="entry name" value="DNA ANNEALING HELICASE AND ENDONUCLEASE ZRANB3 FAMILY MEMBER"/>
    <property type="match status" value="1"/>
</dbReference>
<dbReference type="PANTHER" id="PTHR45766:SF6">
    <property type="entry name" value="SWI_SNF-RELATED MATRIX-ASSOCIATED ACTIN-DEPENDENT REGULATOR OF CHROMATIN SUBFAMILY A-LIKE PROTEIN 1"/>
    <property type="match status" value="1"/>
</dbReference>
<dbReference type="Pfam" id="PF00271">
    <property type="entry name" value="Helicase_C"/>
    <property type="match status" value="1"/>
</dbReference>
<dbReference type="Pfam" id="PF12137">
    <property type="entry name" value="RapA_C"/>
    <property type="match status" value="1"/>
</dbReference>
<dbReference type="Pfam" id="PF00176">
    <property type="entry name" value="SNF2-rel_dom"/>
    <property type="match status" value="1"/>
</dbReference>
<dbReference type="Pfam" id="PF18339">
    <property type="entry name" value="Tudor_1_RapA"/>
    <property type="match status" value="1"/>
</dbReference>
<dbReference type="Pfam" id="PF18337">
    <property type="entry name" value="Tudor_RapA"/>
    <property type="match status" value="1"/>
</dbReference>
<dbReference type="SMART" id="SM00487">
    <property type="entry name" value="DEXDc"/>
    <property type="match status" value="1"/>
</dbReference>
<dbReference type="SMART" id="SM00490">
    <property type="entry name" value="HELICc"/>
    <property type="match status" value="1"/>
</dbReference>
<dbReference type="SUPFAM" id="SSF52540">
    <property type="entry name" value="P-loop containing nucleoside triphosphate hydrolases"/>
    <property type="match status" value="2"/>
</dbReference>
<dbReference type="PROSITE" id="PS51192">
    <property type="entry name" value="HELICASE_ATP_BIND_1"/>
    <property type="match status" value="1"/>
</dbReference>
<dbReference type="PROSITE" id="PS51194">
    <property type="entry name" value="HELICASE_CTER"/>
    <property type="match status" value="1"/>
</dbReference>
<keyword id="KW-0010">Activator</keyword>
<keyword id="KW-0067">ATP-binding</keyword>
<keyword id="KW-0238">DNA-binding</keyword>
<keyword id="KW-0347">Helicase</keyword>
<keyword id="KW-0378">Hydrolase</keyword>
<keyword id="KW-0547">Nucleotide-binding</keyword>
<keyword id="KW-0804">Transcription</keyword>
<keyword id="KW-0805">Transcription regulation</keyword>